<geneLocation type="plasmid">
    <name>F</name>
</geneLocation>
<proteinExistence type="predicted"/>
<protein>
    <recommendedName>
        <fullName>Uncharacterized protein YubO</fullName>
    </recommendedName>
</protein>
<dbReference type="EMBL" id="X17539">
    <property type="protein sequence ID" value="CAA35575.1"/>
    <property type="molecule type" value="Genomic_DNA"/>
</dbReference>
<dbReference type="EMBL" id="AF106329">
    <property type="protein sequence ID" value="AAA99217.1"/>
    <property type="molecule type" value="Genomic_DNA"/>
</dbReference>
<dbReference type="EMBL" id="AP001918">
    <property type="protein sequence ID" value="BAA97938.1"/>
    <property type="molecule type" value="Genomic_DNA"/>
</dbReference>
<dbReference type="PIR" id="S07013">
    <property type="entry name" value="S07013"/>
</dbReference>
<dbReference type="RefSeq" id="NP_061447.1">
    <property type="nucleotide sequence ID" value="NC_002483.1"/>
</dbReference>
<dbReference type="RefSeq" id="WP_000107542.1">
    <property type="nucleotide sequence ID" value="NZ_JACEFS010000057.1"/>
</dbReference>
<dbReference type="RefSeq" id="YP_008997965.1">
    <property type="nucleotide sequence ID" value="NC_023315.1"/>
</dbReference>
<dbReference type="KEGG" id="ecoc:C3026_24445"/>
<dbReference type="PRO" id="PR:Q02885"/>
<keyword id="KW-0614">Plasmid</keyword>
<reference key="1">
    <citation type="journal article" date="1989" name="Mol. Gen. Genet.">
        <title>Nucleotide sequence of the leading region adjacent to the origin of transfer on plasmid F and its conservation among conjugative plasmids.</title>
        <authorList>
            <person name="Loh S."/>
            <person name="Cram D."/>
            <person name="Skurray R.A."/>
        </authorList>
    </citation>
    <scope>NUCLEOTIDE SEQUENCE [GENOMIC DNA]</scope>
</reference>
<reference key="2">
    <citation type="journal article" date="1999" name="Plasmid">
        <title>Nucleotide sequence of the F plasmid leading region.</title>
        <authorList>
            <person name="Manwaring N.P."/>
            <person name="Skurray R.A."/>
            <person name="Firth N."/>
        </authorList>
    </citation>
    <scope>NUCLEOTIDE SEQUENCE [GENOMIC DNA]</scope>
</reference>
<reference key="3">
    <citation type="submission" date="2000-04" db="EMBL/GenBank/DDBJ databases">
        <title>Complete nucleotide sequence of the F plasmid: its implications for organization and diversification of plasmid genomes.</title>
        <authorList>
            <person name="Shimizu H."/>
            <person name="Saitoh Y."/>
            <person name="Suda Y."/>
            <person name="Uehara K."/>
            <person name="Sampei G."/>
            <person name="Mizobuchi K."/>
        </authorList>
    </citation>
    <scope>NUCLEOTIDE SEQUENCE [LARGE SCALE GENOMIC DNA]</scope>
    <source>
        <strain>K12 / CR63</strain>
    </source>
</reference>
<sequence length="95" mass="11008">MSTRNIHVNTASYTLLVAGKKKNTGEEWDVLEFSSLTELKKYRKSHPEKMAFSYSYALSRGVDTQFRHINIAEADHFKQFLRQIKRAGLDIRAIC</sequence>
<gene>
    <name type="primary">yubO</name>
    <name type="synonym">ygeA</name>
    <name type="ordered locus">ECOK12F068</name>
</gene>
<feature type="chain" id="PRO_0000262317" description="Uncharacterized protein YubO">
    <location>
        <begin position="1"/>
        <end position="95"/>
    </location>
</feature>
<accession>Q02885</accession>
<accession>Q7AJP8</accession>
<organism>
    <name type="scientific">Escherichia coli (strain K12)</name>
    <dbReference type="NCBI Taxonomy" id="83333"/>
    <lineage>
        <taxon>Bacteria</taxon>
        <taxon>Pseudomonadati</taxon>
        <taxon>Pseudomonadota</taxon>
        <taxon>Gammaproteobacteria</taxon>
        <taxon>Enterobacterales</taxon>
        <taxon>Enterobacteriaceae</taxon>
        <taxon>Escherichia</taxon>
    </lineage>
</organism>
<name>YUBO_ECOLI</name>